<protein>
    <recommendedName>
        <fullName evidence="2">Large ribosomal subunit protein bL31c</fullName>
    </recommendedName>
    <alternativeName>
        <fullName>50S ribosomal protein L31, chloroplastic</fullName>
    </alternativeName>
</protein>
<keyword id="KW-0150">Chloroplast</keyword>
<keyword id="KW-0934">Plastid</keyword>
<keyword id="KW-1185">Reference proteome</keyword>
<keyword id="KW-0687">Ribonucleoprotein</keyword>
<keyword id="KW-0689">Ribosomal protein</keyword>
<keyword id="KW-0694">RNA-binding</keyword>
<keyword id="KW-0699">rRNA-binding</keyword>
<organism>
    <name type="scientific">Cyanidioschyzon merolae (strain NIES-3377 / 10D)</name>
    <name type="common">Unicellular red alga</name>
    <dbReference type="NCBI Taxonomy" id="280699"/>
    <lineage>
        <taxon>Eukaryota</taxon>
        <taxon>Rhodophyta</taxon>
        <taxon>Bangiophyceae</taxon>
        <taxon>Cyanidiales</taxon>
        <taxon>Cyanidiaceae</taxon>
        <taxon>Cyanidioschyzon</taxon>
    </lineage>
</organism>
<proteinExistence type="inferred from homology"/>
<gene>
    <name type="primary">rpl31</name>
</gene>
<accession>Q85FU0</accession>
<feature type="chain" id="PRO_0000173187" description="Large ribosomal subunit protein bL31c">
    <location>
        <begin position="1"/>
        <end position="67"/>
    </location>
</feature>
<evidence type="ECO:0000250" key="1"/>
<evidence type="ECO:0000305" key="2"/>
<dbReference type="EMBL" id="AB002583">
    <property type="protein sequence ID" value="BAC76255.1"/>
    <property type="molecule type" value="Genomic_DNA"/>
</dbReference>
<dbReference type="RefSeq" id="NP_849093.1">
    <property type="nucleotide sequence ID" value="NC_004799.1"/>
</dbReference>
<dbReference type="STRING" id="280699.Q85FU0"/>
<dbReference type="EnsemblPlants" id="CMV188CT">
    <property type="protein sequence ID" value="CMV188CT"/>
    <property type="gene ID" value="CMV188C"/>
</dbReference>
<dbReference type="GeneID" id="844985"/>
<dbReference type="Gramene" id="CMV188CT">
    <property type="protein sequence ID" value="CMV188CT"/>
    <property type="gene ID" value="CMV188C"/>
</dbReference>
<dbReference type="KEGG" id="cme:CymeCp161"/>
<dbReference type="eggNOG" id="ENOG502S1BJ">
    <property type="taxonomic scope" value="Eukaryota"/>
</dbReference>
<dbReference type="HOGENOM" id="CLU_114306_1_2_1"/>
<dbReference type="Proteomes" id="UP000007014">
    <property type="component" value="Chloroplast"/>
</dbReference>
<dbReference type="GO" id="GO:0009507">
    <property type="term" value="C:chloroplast"/>
    <property type="evidence" value="ECO:0007669"/>
    <property type="project" value="UniProtKB-SubCell"/>
</dbReference>
<dbReference type="GO" id="GO:1990904">
    <property type="term" value="C:ribonucleoprotein complex"/>
    <property type="evidence" value="ECO:0007669"/>
    <property type="project" value="UniProtKB-KW"/>
</dbReference>
<dbReference type="GO" id="GO:0005840">
    <property type="term" value="C:ribosome"/>
    <property type="evidence" value="ECO:0007669"/>
    <property type="project" value="UniProtKB-KW"/>
</dbReference>
<dbReference type="GO" id="GO:0019843">
    <property type="term" value="F:rRNA binding"/>
    <property type="evidence" value="ECO:0007669"/>
    <property type="project" value="UniProtKB-KW"/>
</dbReference>
<dbReference type="GO" id="GO:0003735">
    <property type="term" value="F:structural constituent of ribosome"/>
    <property type="evidence" value="ECO:0007669"/>
    <property type="project" value="InterPro"/>
</dbReference>
<dbReference type="GO" id="GO:0006412">
    <property type="term" value="P:translation"/>
    <property type="evidence" value="ECO:0007669"/>
    <property type="project" value="InterPro"/>
</dbReference>
<dbReference type="Gene3D" id="4.10.830.30">
    <property type="entry name" value="Ribosomal protein L31"/>
    <property type="match status" value="1"/>
</dbReference>
<dbReference type="InterPro" id="IPR034704">
    <property type="entry name" value="Ribosomal_bL28/bL31-like_sf"/>
</dbReference>
<dbReference type="InterPro" id="IPR002150">
    <property type="entry name" value="Ribosomal_bL31"/>
</dbReference>
<dbReference type="InterPro" id="IPR042105">
    <property type="entry name" value="Ribosomal_bL31_sf"/>
</dbReference>
<dbReference type="NCBIfam" id="TIGR00105">
    <property type="entry name" value="L31"/>
    <property type="match status" value="1"/>
</dbReference>
<dbReference type="NCBIfam" id="NF001809">
    <property type="entry name" value="PRK00528.1"/>
    <property type="match status" value="1"/>
</dbReference>
<dbReference type="PANTHER" id="PTHR33280">
    <property type="entry name" value="50S RIBOSOMAL PROTEIN L31, CHLOROPLASTIC"/>
    <property type="match status" value="1"/>
</dbReference>
<dbReference type="PANTHER" id="PTHR33280:SF1">
    <property type="entry name" value="LARGE RIBOSOMAL SUBUNIT PROTEIN BL31C"/>
    <property type="match status" value="1"/>
</dbReference>
<dbReference type="Pfam" id="PF01197">
    <property type="entry name" value="Ribosomal_L31"/>
    <property type="match status" value="1"/>
</dbReference>
<dbReference type="PRINTS" id="PR01249">
    <property type="entry name" value="RIBOSOMALL31"/>
</dbReference>
<dbReference type="SUPFAM" id="SSF143800">
    <property type="entry name" value="L28p-like"/>
    <property type="match status" value="1"/>
</dbReference>
<dbReference type="PROSITE" id="PS01143">
    <property type="entry name" value="RIBOSOMAL_L31"/>
    <property type="match status" value="1"/>
</dbReference>
<geneLocation type="chloroplast"/>
<reference key="1">
    <citation type="journal article" date="2003" name="DNA Res.">
        <title>Complete sequence and analysis of the plastid genome of the unicellular red alga Cyanidioschyzon merolae.</title>
        <authorList>
            <person name="Ohta N."/>
            <person name="Matsuzaki M."/>
            <person name="Misumi O."/>
            <person name="Miyagishima S.-Y."/>
            <person name="Nozaki H."/>
            <person name="Tanaka K."/>
            <person name="Shin-i T."/>
            <person name="Kohara Y."/>
            <person name="Kuroiwa T."/>
        </authorList>
    </citation>
    <scope>NUCLEOTIDE SEQUENCE [LARGE SCALE GENOMIC DNA]</scope>
    <source>
        <strain>NIES-3377 / 10D</strain>
    </source>
</reference>
<name>RK31_CYAM1</name>
<comment type="function">
    <text evidence="1">Binds the 23S rRNA.</text>
</comment>
<comment type="subunit">
    <text evidence="1">Part of the 50S ribosomal subunit.</text>
</comment>
<comment type="subcellular location">
    <subcellularLocation>
        <location>Plastid</location>
        <location>Chloroplast</location>
    </subcellularLocation>
</comment>
<comment type="similarity">
    <text evidence="2">Belongs to the bacterial ribosomal protein bL31 family. Type A subfamily.</text>
</comment>
<sequence length="67" mass="7893">MKKNIHPKWYKHSIVYGNGQQILTVGSTKPELHVEVWSSIHPFYTGSQKQLDTEGRIEKFMRKYGMK</sequence>